<accession>Q9C6S7</accession>
<accession>C0Z341</accession>
<accession>Q8H7B2</accession>
<gene>
    <name type="ordered locus">At1g31850</name>
    <name type="ORF">F5M6.14</name>
</gene>
<reference key="1">
    <citation type="submission" date="1998-08" db="EMBL/GenBank/DDBJ databases">
        <title>Signal peptide selection derived cDNAs from Arabidopsis thaliana leaves and guard cells.</title>
        <authorList>
            <person name="Stracke R."/>
            <person name="Palme K."/>
        </authorList>
    </citation>
    <scope>NUCLEOTIDE SEQUENCE [MRNA]</scope>
</reference>
<reference key="2">
    <citation type="journal article" date="2000" name="Nature">
        <title>Sequence and analysis of chromosome 1 of the plant Arabidopsis thaliana.</title>
        <authorList>
            <person name="Theologis A."/>
            <person name="Ecker J.R."/>
            <person name="Palm C.J."/>
            <person name="Federspiel N.A."/>
            <person name="Kaul S."/>
            <person name="White O."/>
            <person name="Alonso J."/>
            <person name="Altafi H."/>
            <person name="Araujo R."/>
            <person name="Bowman C.L."/>
            <person name="Brooks S.Y."/>
            <person name="Buehler E."/>
            <person name="Chan A."/>
            <person name="Chao Q."/>
            <person name="Chen H."/>
            <person name="Cheuk R.F."/>
            <person name="Chin C.W."/>
            <person name="Chung M.K."/>
            <person name="Conn L."/>
            <person name="Conway A.B."/>
            <person name="Conway A.R."/>
            <person name="Creasy T.H."/>
            <person name="Dewar K."/>
            <person name="Dunn P."/>
            <person name="Etgu P."/>
            <person name="Feldblyum T.V."/>
            <person name="Feng J.-D."/>
            <person name="Fong B."/>
            <person name="Fujii C.Y."/>
            <person name="Gill J.E."/>
            <person name="Goldsmith A.D."/>
            <person name="Haas B."/>
            <person name="Hansen N.F."/>
            <person name="Hughes B."/>
            <person name="Huizar L."/>
            <person name="Hunter J.L."/>
            <person name="Jenkins J."/>
            <person name="Johnson-Hopson C."/>
            <person name="Khan S."/>
            <person name="Khaykin E."/>
            <person name="Kim C.J."/>
            <person name="Koo H.L."/>
            <person name="Kremenetskaia I."/>
            <person name="Kurtz D.B."/>
            <person name="Kwan A."/>
            <person name="Lam B."/>
            <person name="Langin-Hooper S."/>
            <person name="Lee A."/>
            <person name="Lee J.M."/>
            <person name="Lenz C.A."/>
            <person name="Li J.H."/>
            <person name="Li Y.-P."/>
            <person name="Lin X."/>
            <person name="Liu S.X."/>
            <person name="Liu Z.A."/>
            <person name="Luros J.S."/>
            <person name="Maiti R."/>
            <person name="Marziali A."/>
            <person name="Militscher J."/>
            <person name="Miranda M."/>
            <person name="Nguyen M."/>
            <person name="Nierman W.C."/>
            <person name="Osborne B.I."/>
            <person name="Pai G."/>
            <person name="Peterson J."/>
            <person name="Pham P.K."/>
            <person name="Rizzo M."/>
            <person name="Rooney T."/>
            <person name="Rowley D."/>
            <person name="Sakano H."/>
            <person name="Salzberg S.L."/>
            <person name="Schwartz J.R."/>
            <person name="Shinn P."/>
            <person name="Southwick A.M."/>
            <person name="Sun H."/>
            <person name="Tallon L.J."/>
            <person name="Tambunga G."/>
            <person name="Toriumi M.J."/>
            <person name="Town C.D."/>
            <person name="Utterback T."/>
            <person name="Van Aken S."/>
            <person name="Vaysberg M."/>
            <person name="Vysotskaia V.S."/>
            <person name="Walker M."/>
            <person name="Wu D."/>
            <person name="Yu G."/>
            <person name="Fraser C.M."/>
            <person name="Venter J.C."/>
            <person name="Davis R.W."/>
        </authorList>
    </citation>
    <scope>NUCLEOTIDE SEQUENCE [LARGE SCALE GENOMIC DNA]</scope>
    <source>
        <strain>cv. Columbia</strain>
    </source>
</reference>
<reference key="3">
    <citation type="journal article" date="2017" name="Plant J.">
        <title>Araport11: a complete reannotation of the Arabidopsis thaliana reference genome.</title>
        <authorList>
            <person name="Cheng C.Y."/>
            <person name="Krishnakumar V."/>
            <person name="Chan A.P."/>
            <person name="Thibaud-Nissen F."/>
            <person name="Schobel S."/>
            <person name="Town C.D."/>
        </authorList>
    </citation>
    <scope>GENOME REANNOTATION</scope>
    <source>
        <strain>cv. Columbia</strain>
    </source>
</reference>
<reference key="4">
    <citation type="journal article" date="2003" name="Science">
        <title>Empirical analysis of transcriptional activity in the Arabidopsis genome.</title>
        <authorList>
            <person name="Yamada K."/>
            <person name="Lim J."/>
            <person name="Dale J.M."/>
            <person name="Chen H."/>
            <person name="Shinn P."/>
            <person name="Palm C.J."/>
            <person name="Southwick A.M."/>
            <person name="Wu H.C."/>
            <person name="Kim C.J."/>
            <person name="Nguyen M."/>
            <person name="Pham P.K."/>
            <person name="Cheuk R.F."/>
            <person name="Karlin-Newmann G."/>
            <person name="Liu S.X."/>
            <person name="Lam B."/>
            <person name="Sakano H."/>
            <person name="Wu T."/>
            <person name="Yu G."/>
            <person name="Miranda M."/>
            <person name="Quach H.L."/>
            <person name="Tripp M."/>
            <person name="Chang C.H."/>
            <person name="Lee J.M."/>
            <person name="Toriumi M.J."/>
            <person name="Chan M.M."/>
            <person name="Tang C.C."/>
            <person name="Onodera C.S."/>
            <person name="Deng J.M."/>
            <person name="Akiyama K."/>
            <person name="Ansari Y."/>
            <person name="Arakawa T."/>
            <person name="Banh J."/>
            <person name="Banno F."/>
            <person name="Bowser L."/>
            <person name="Brooks S.Y."/>
            <person name="Carninci P."/>
            <person name="Chao Q."/>
            <person name="Choy N."/>
            <person name="Enju A."/>
            <person name="Goldsmith A.D."/>
            <person name="Gurjal M."/>
            <person name="Hansen N.F."/>
            <person name="Hayashizaki Y."/>
            <person name="Johnson-Hopson C."/>
            <person name="Hsuan V.W."/>
            <person name="Iida K."/>
            <person name="Karnes M."/>
            <person name="Khan S."/>
            <person name="Koesema E."/>
            <person name="Ishida J."/>
            <person name="Jiang P.X."/>
            <person name="Jones T."/>
            <person name="Kawai J."/>
            <person name="Kamiya A."/>
            <person name="Meyers C."/>
            <person name="Nakajima M."/>
            <person name="Narusaka M."/>
            <person name="Seki M."/>
            <person name="Sakurai T."/>
            <person name="Satou M."/>
            <person name="Tamse R."/>
            <person name="Vaysberg M."/>
            <person name="Wallender E.K."/>
            <person name="Wong C."/>
            <person name="Yamamura Y."/>
            <person name="Yuan S."/>
            <person name="Shinozaki K."/>
            <person name="Davis R.W."/>
            <person name="Theologis A."/>
            <person name="Ecker J.R."/>
        </authorList>
    </citation>
    <scope>NUCLEOTIDE SEQUENCE [LARGE SCALE MRNA]</scope>
    <source>
        <strain>cv. Columbia</strain>
    </source>
</reference>
<reference key="5">
    <citation type="journal article" date="2009" name="DNA Res.">
        <title>Analysis of multiple occurrences of alternative splicing events in Arabidopsis thaliana using novel sequenced full-length cDNAs.</title>
        <authorList>
            <person name="Iida K."/>
            <person name="Fukami-Kobayashi K."/>
            <person name="Toyoda A."/>
            <person name="Sakaki Y."/>
            <person name="Kobayashi M."/>
            <person name="Seki M."/>
            <person name="Shinozaki K."/>
        </authorList>
    </citation>
    <scope>NUCLEOTIDE SEQUENCE [LARGE SCALE MRNA]</scope>
    <source>
        <strain>cv. Columbia</strain>
    </source>
</reference>
<reference key="6">
    <citation type="journal article" date="2007" name="Plant J.">
        <title>The TUMOROUS SHOOT DEVELOPMENT2 gene of Arabidopsis encoding a putative methyltransferase is required for cell adhesion and co-ordinated plant development.</title>
        <authorList>
            <person name="Krupkova E."/>
            <person name="Immerzeel P."/>
            <person name="Pauly M."/>
            <person name="Schmulling T."/>
        </authorList>
    </citation>
    <scope>GENE FAMILY</scope>
</reference>
<proteinExistence type="evidence at transcript level"/>
<keyword id="KW-0325">Glycoprotein</keyword>
<keyword id="KW-0333">Golgi apparatus</keyword>
<keyword id="KW-0472">Membrane</keyword>
<keyword id="KW-0489">Methyltransferase</keyword>
<keyword id="KW-1185">Reference proteome</keyword>
<keyword id="KW-0735">Signal-anchor</keyword>
<keyword id="KW-0808">Transferase</keyword>
<keyword id="KW-0812">Transmembrane</keyword>
<keyword id="KW-1133">Transmembrane helix</keyword>
<organism>
    <name type="scientific">Arabidopsis thaliana</name>
    <name type="common">Mouse-ear cress</name>
    <dbReference type="NCBI Taxonomy" id="3702"/>
    <lineage>
        <taxon>Eukaryota</taxon>
        <taxon>Viridiplantae</taxon>
        <taxon>Streptophyta</taxon>
        <taxon>Embryophyta</taxon>
        <taxon>Tracheophyta</taxon>
        <taxon>Spermatophyta</taxon>
        <taxon>Magnoliopsida</taxon>
        <taxon>eudicotyledons</taxon>
        <taxon>Gunneridae</taxon>
        <taxon>Pentapetalae</taxon>
        <taxon>rosids</taxon>
        <taxon>malvids</taxon>
        <taxon>Brassicales</taxon>
        <taxon>Brassicaceae</taxon>
        <taxon>Camelineae</taxon>
        <taxon>Arabidopsis</taxon>
    </lineage>
</organism>
<sequence>MKSGKQSSQPEKGTSRILSLTVLFIAFCGFSFYLGGIFCSERDKIVAKDVTRTTTKAVASPKEPTATPIQIKSVSFPECGSEFQDYTPCTDPKRWKKYGVHRLSFLERHCPPVYEKNECLIPPPDGYKPPIRWPKSREQCWYRNVPYDWINKQKSNQHWLKKEGDKFHFPGGGTMFPRGVSHYVDLMQDLIPEMKDGTVRTAIDTGCGVASWGGDLLDRGILSLSLAPRDNHEAQVQFALERGIPAILGIISTQRLPFPSNAFDMAHCSRCLIPWTEFGGIYLLEIHRIVRPGGFWVLSGPPVNYNRRWRGWNTTMEDQKSDYNKLQSLLTSMCFKKYAQKDDIAVWQKLSDKSCYDKIAKNMEAYPPKCDDSIEPDSAWYTPLRPCVVAPTPKVKKSGLGSIPKWPERLHVAPERIGDVHGGSANSLKHDDGKWKNRVKHYKKVLPALGTDKIRNVMDMNTVYGGFSAALIEDPIWVMNVVSSYSANSLPVVFDRGLIGTYHDWCEAFSTYPRTYDLLHLDSLFTLESHRCEMKYILLEMDRILRPSGYVIIRESSYFMDAITTLAKGIRWSCRREETEYAVKSEKILVCQKKLWFSSNQTS</sequence>
<protein>
    <recommendedName>
        <fullName>Probable methyltransferase PMT20</fullName>
        <ecNumber>2.1.1.-</ecNumber>
    </recommendedName>
</protein>
<dbReference type="EC" id="2.1.1.-"/>
<dbReference type="EMBL" id="AF083759">
    <property type="protein sequence ID" value="AAN60317.1"/>
    <property type="status" value="ALT_FRAME"/>
    <property type="molecule type" value="mRNA"/>
</dbReference>
<dbReference type="EMBL" id="AC079041">
    <property type="protein sequence ID" value="AAG50728.1"/>
    <property type="molecule type" value="Genomic_DNA"/>
</dbReference>
<dbReference type="EMBL" id="CP002684">
    <property type="protein sequence ID" value="AEE31405.1"/>
    <property type="molecule type" value="Genomic_DNA"/>
</dbReference>
<dbReference type="EMBL" id="CP002684">
    <property type="protein sequence ID" value="AEE31406.1"/>
    <property type="molecule type" value="Genomic_DNA"/>
</dbReference>
<dbReference type="EMBL" id="CP002684">
    <property type="protein sequence ID" value="AEE31407.1"/>
    <property type="molecule type" value="Genomic_DNA"/>
</dbReference>
<dbReference type="EMBL" id="CP002684">
    <property type="protein sequence ID" value="ANM58540.1"/>
    <property type="molecule type" value="Genomic_DNA"/>
</dbReference>
<dbReference type="EMBL" id="AY128291">
    <property type="protein sequence ID" value="AAM91099.1"/>
    <property type="molecule type" value="mRNA"/>
</dbReference>
<dbReference type="EMBL" id="BT000825">
    <property type="protein sequence ID" value="AAN33200.1"/>
    <property type="molecule type" value="mRNA"/>
</dbReference>
<dbReference type="EMBL" id="AK319005">
    <property type="protein sequence ID" value="BAH57120.1"/>
    <property type="status" value="ALT_FRAME"/>
    <property type="molecule type" value="mRNA"/>
</dbReference>
<dbReference type="PIR" id="F86442">
    <property type="entry name" value="F86442"/>
</dbReference>
<dbReference type="RefSeq" id="NP_001319125.1">
    <property type="nucleotide sequence ID" value="NM_001332982.1"/>
</dbReference>
<dbReference type="RefSeq" id="NP_174468.1">
    <property type="nucleotide sequence ID" value="NM_102922.5"/>
</dbReference>
<dbReference type="RefSeq" id="NP_849736.1">
    <property type="nucleotide sequence ID" value="NM_179405.4"/>
</dbReference>
<dbReference type="RefSeq" id="NP_973949.1">
    <property type="nucleotide sequence ID" value="NM_202220.2"/>
</dbReference>
<dbReference type="FunCoup" id="Q9C6S7">
    <property type="interactions" value="277"/>
</dbReference>
<dbReference type="GlyGen" id="Q9C6S7">
    <property type="glycosylation" value="3 sites"/>
</dbReference>
<dbReference type="PaxDb" id="3702-AT1G31850.1"/>
<dbReference type="ProteomicsDB" id="226155"/>
<dbReference type="EnsemblPlants" id="AT1G31850.1">
    <property type="protein sequence ID" value="AT1G31850.1"/>
    <property type="gene ID" value="AT1G31850"/>
</dbReference>
<dbReference type="EnsemblPlants" id="AT1G31850.2">
    <property type="protein sequence ID" value="AT1G31850.2"/>
    <property type="gene ID" value="AT1G31850"/>
</dbReference>
<dbReference type="EnsemblPlants" id="AT1G31850.3">
    <property type="protein sequence ID" value="AT1G31850.3"/>
    <property type="gene ID" value="AT1G31850"/>
</dbReference>
<dbReference type="EnsemblPlants" id="AT1G31850.4">
    <property type="protein sequence ID" value="AT1G31850.4"/>
    <property type="gene ID" value="AT1G31850"/>
</dbReference>
<dbReference type="GeneID" id="840075"/>
<dbReference type="Gramene" id="AT1G31850.1">
    <property type="protein sequence ID" value="AT1G31850.1"/>
    <property type="gene ID" value="AT1G31850"/>
</dbReference>
<dbReference type="Gramene" id="AT1G31850.2">
    <property type="protein sequence ID" value="AT1G31850.2"/>
    <property type="gene ID" value="AT1G31850"/>
</dbReference>
<dbReference type="Gramene" id="AT1G31850.3">
    <property type="protein sequence ID" value="AT1G31850.3"/>
    <property type="gene ID" value="AT1G31850"/>
</dbReference>
<dbReference type="Gramene" id="AT1G31850.4">
    <property type="protein sequence ID" value="AT1G31850.4"/>
    <property type="gene ID" value="AT1G31850"/>
</dbReference>
<dbReference type="KEGG" id="ath:AT1G31850"/>
<dbReference type="Araport" id="AT1G31850"/>
<dbReference type="TAIR" id="AT1G31850"/>
<dbReference type="eggNOG" id="ENOG502QQA9">
    <property type="taxonomic scope" value="Eukaryota"/>
</dbReference>
<dbReference type="HOGENOM" id="CLU_010485_2_2_1"/>
<dbReference type="InParanoid" id="Q9C6S7"/>
<dbReference type="OMA" id="CEMKYIL"/>
<dbReference type="PhylomeDB" id="Q9C6S7"/>
<dbReference type="PRO" id="PR:Q9C6S7"/>
<dbReference type="Proteomes" id="UP000006548">
    <property type="component" value="Chromosome 1"/>
</dbReference>
<dbReference type="ExpressionAtlas" id="Q9C6S7">
    <property type="expression patterns" value="baseline and differential"/>
</dbReference>
<dbReference type="GO" id="GO:0005768">
    <property type="term" value="C:endosome"/>
    <property type="evidence" value="ECO:0007005"/>
    <property type="project" value="TAIR"/>
</dbReference>
<dbReference type="GO" id="GO:0005794">
    <property type="term" value="C:Golgi apparatus"/>
    <property type="evidence" value="ECO:0007005"/>
    <property type="project" value="TAIR"/>
</dbReference>
<dbReference type="GO" id="GO:0005797">
    <property type="term" value="C:Golgi medial cisterna"/>
    <property type="evidence" value="ECO:0007005"/>
    <property type="project" value="TAIR"/>
</dbReference>
<dbReference type="GO" id="GO:0000139">
    <property type="term" value="C:Golgi membrane"/>
    <property type="evidence" value="ECO:0007669"/>
    <property type="project" value="UniProtKB-SubCell"/>
</dbReference>
<dbReference type="GO" id="GO:0005802">
    <property type="term" value="C:trans-Golgi network"/>
    <property type="evidence" value="ECO:0007005"/>
    <property type="project" value="TAIR"/>
</dbReference>
<dbReference type="GO" id="GO:0008168">
    <property type="term" value="F:methyltransferase activity"/>
    <property type="evidence" value="ECO:0007669"/>
    <property type="project" value="UniProtKB-KW"/>
</dbReference>
<dbReference type="GO" id="GO:0032259">
    <property type="term" value="P:methylation"/>
    <property type="evidence" value="ECO:0007669"/>
    <property type="project" value="UniProtKB-KW"/>
</dbReference>
<dbReference type="FunFam" id="3.40.50.150:FF:000076">
    <property type="entry name" value="probable methyltransferase PMT21"/>
    <property type="match status" value="1"/>
</dbReference>
<dbReference type="Gene3D" id="3.40.50.150">
    <property type="entry name" value="Vaccinia Virus protein VP39"/>
    <property type="match status" value="1"/>
</dbReference>
<dbReference type="InterPro" id="IPR004159">
    <property type="entry name" value="Put_SAM_MeTrfase"/>
</dbReference>
<dbReference type="InterPro" id="IPR029063">
    <property type="entry name" value="SAM-dependent_MTases_sf"/>
</dbReference>
<dbReference type="PANTHER" id="PTHR10108:SF1109">
    <property type="entry name" value="METHYLTRANSFERASE PMT20-RELATED"/>
    <property type="match status" value="1"/>
</dbReference>
<dbReference type="PANTHER" id="PTHR10108">
    <property type="entry name" value="SAM-DEPENDENT METHYLTRANSFERASE"/>
    <property type="match status" value="1"/>
</dbReference>
<dbReference type="Pfam" id="PF03141">
    <property type="entry name" value="Methyltransf_29"/>
    <property type="match status" value="1"/>
</dbReference>
<dbReference type="SUPFAM" id="SSF53335">
    <property type="entry name" value="S-adenosyl-L-methionine-dependent methyltransferases"/>
    <property type="match status" value="2"/>
</dbReference>
<name>PMTK_ARATH</name>
<feature type="chain" id="PRO_0000393260" description="Probable methyltransferase PMT20">
    <location>
        <begin position="1"/>
        <end position="603"/>
    </location>
</feature>
<feature type="topological domain" description="Cytoplasmic" evidence="1">
    <location>
        <begin position="1"/>
        <end position="16"/>
    </location>
</feature>
<feature type="transmembrane region" description="Helical; Signal-anchor for type II membrane protein" evidence="1">
    <location>
        <begin position="17"/>
        <end position="37"/>
    </location>
</feature>
<feature type="topological domain" description="Lumenal" evidence="1">
    <location>
        <begin position="38"/>
        <end position="603"/>
    </location>
</feature>
<feature type="glycosylation site" description="N-linked (GlcNAc...) asparagine" evidence="1">
    <location>
        <position position="313"/>
    </location>
</feature>
<feature type="glycosylation site" description="N-linked (GlcNAc...) asparagine" evidence="1">
    <location>
        <position position="600"/>
    </location>
</feature>
<evidence type="ECO:0000255" key="1"/>
<evidence type="ECO:0000305" key="2"/>
<comment type="subcellular location">
    <subcellularLocation>
        <location evidence="2">Golgi apparatus membrane</location>
        <topology evidence="2">Single-pass type II membrane protein</topology>
    </subcellularLocation>
</comment>
<comment type="similarity">
    <text evidence="2">Belongs to the methyltransferase superfamily.</text>
</comment>
<comment type="sequence caution" evidence="2">
    <conflict type="frameshift">
        <sequence resource="EMBL-CDS" id="AAN60317"/>
    </conflict>
</comment>
<comment type="sequence caution" evidence="2">
    <conflict type="frameshift">
        <sequence resource="EMBL-CDS" id="BAH57120"/>
    </conflict>
</comment>